<gene>
    <name evidence="1" type="primary">rbcL</name>
</gene>
<organism>
    <name type="scientific">Equisetum arvense</name>
    <name type="common">Field horsetail</name>
    <name type="synonym">Common horsetail</name>
    <dbReference type="NCBI Taxonomy" id="3258"/>
    <lineage>
        <taxon>Eukaryota</taxon>
        <taxon>Viridiplantae</taxon>
        <taxon>Streptophyta</taxon>
        <taxon>Embryophyta</taxon>
        <taxon>Tracheophyta</taxon>
        <taxon>Polypodiopsida</taxon>
        <taxon>Equisetidae</taxon>
        <taxon>Equisetales</taxon>
        <taxon>Equisetaceae</taxon>
        <taxon>Equisetum</taxon>
    </lineage>
</organism>
<accession>P48702</accession>
<evidence type="ECO:0000255" key="1">
    <source>
        <dbReference type="HAMAP-Rule" id="MF_01338"/>
    </source>
</evidence>
<proteinExistence type="inferred from homology"/>
<geneLocation type="chloroplast"/>
<keyword id="KW-0007">Acetylation</keyword>
<keyword id="KW-0113">Calvin cycle</keyword>
<keyword id="KW-0120">Carbon dioxide fixation</keyword>
<keyword id="KW-0150">Chloroplast</keyword>
<keyword id="KW-1015">Disulfide bond</keyword>
<keyword id="KW-0456">Lyase</keyword>
<keyword id="KW-0460">Magnesium</keyword>
<keyword id="KW-0479">Metal-binding</keyword>
<keyword id="KW-0488">Methylation</keyword>
<keyword id="KW-0503">Monooxygenase</keyword>
<keyword id="KW-0560">Oxidoreductase</keyword>
<keyword id="KW-0601">Photorespiration</keyword>
<keyword id="KW-0602">Photosynthesis</keyword>
<keyword id="KW-0934">Plastid</keyword>
<protein>
    <recommendedName>
        <fullName evidence="1">Ribulose bisphosphate carboxylase large chain</fullName>
        <shortName evidence="1">RuBisCO large subunit</shortName>
        <ecNumber evidence="1">4.1.1.39</ecNumber>
    </recommendedName>
</protein>
<dbReference type="EC" id="4.1.1.39" evidence="1"/>
<dbReference type="EMBL" id="L11053">
    <property type="protein sequence ID" value="AAA57239.1"/>
    <property type="molecule type" value="Genomic_DNA"/>
</dbReference>
<dbReference type="RefSeq" id="YP_004021777.1">
    <property type="nucleotide sequence ID" value="NC_014699.1"/>
</dbReference>
<dbReference type="SMR" id="P48702"/>
<dbReference type="GeneID" id="9978471"/>
<dbReference type="GO" id="GO:0009507">
    <property type="term" value="C:chloroplast"/>
    <property type="evidence" value="ECO:0007669"/>
    <property type="project" value="UniProtKB-SubCell"/>
</dbReference>
<dbReference type="GO" id="GO:0000287">
    <property type="term" value="F:magnesium ion binding"/>
    <property type="evidence" value="ECO:0007669"/>
    <property type="project" value="UniProtKB-UniRule"/>
</dbReference>
<dbReference type="GO" id="GO:0004497">
    <property type="term" value="F:monooxygenase activity"/>
    <property type="evidence" value="ECO:0007669"/>
    <property type="project" value="UniProtKB-KW"/>
</dbReference>
<dbReference type="GO" id="GO:0016984">
    <property type="term" value="F:ribulose-bisphosphate carboxylase activity"/>
    <property type="evidence" value="ECO:0007669"/>
    <property type="project" value="UniProtKB-UniRule"/>
</dbReference>
<dbReference type="GO" id="GO:0009853">
    <property type="term" value="P:photorespiration"/>
    <property type="evidence" value="ECO:0007669"/>
    <property type="project" value="UniProtKB-KW"/>
</dbReference>
<dbReference type="GO" id="GO:0019253">
    <property type="term" value="P:reductive pentose-phosphate cycle"/>
    <property type="evidence" value="ECO:0007669"/>
    <property type="project" value="UniProtKB-UniRule"/>
</dbReference>
<dbReference type="CDD" id="cd08212">
    <property type="entry name" value="RuBisCO_large_I"/>
    <property type="match status" value="1"/>
</dbReference>
<dbReference type="FunFam" id="3.20.20.110:FF:000001">
    <property type="entry name" value="Ribulose bisphosphate carboxylase large chain"/>
    <property type="match status" value="1"/>
</dbReference>
<dbReference type="FunFam" id="3.30.70.150:FF:000001">
    <property type="entry name" value="Ribulose bisphosphate carboxylase large chain"/>
    <property type="match status" value="1"/>
</dbReference>
<dbReference type="Gene3D" id="3.20.20.110">
    <property type="entry name" value="Ribulose bisphosphate carboxylase, large subunit, C-terminal domain"/>
    <property type="match status" value="1"/>
</dbReference>
<dbReference type="Gene3D" id="3.30.70.150">
    <property type="entry name" value="RuBisCO large subunit, N-terminal domain"/>
    <property type="match status" value="1"/>
</dbReference>
<dbReference type="HAMAP" id="MF_01338">
    <property type="entry name" value="RuBisCO_L_type1"/>
    <property type="match status" value="1"/>
</dbReference>
<dbReference type="InterPro" id="IPR033966">
    <property type="entry name" value="RuBisCO"/>
</dbReference>
<dbReference type="InterPro" id="IPR020878">
    <property type="entry name" value="RuBisCo_large_chain_AS"/>
</dbReference>
<dbReference type="InterPro" id="IPR000685">
    <property type="entry name" value="RuBisCO_lsu_C"/>
</dbReference>
<dbReference type="InterPro" id="IPR036376">
    <property type="entry name" value="RuBisCO_lsu_C_sf"/>
</dbReference>
<dbReference type="InterPro" id="IPR017443">
    <property type="entry name" value="RuBisCO_lsu_fd_N"/>
</dbReference>
<dbReference type="InterPro" id="IPR036422">
    <property type="entry name" value="RuBisCO_lsu_N_sf"/>
</dbReference>
<dbReference type="InterPro" id="IPR020888">
    <property type="entry name" value="RuBisCO_lsuI"/>
</dbReference>
<dbReference type="NCBIfam" id="NF003252">
    <property type="entry name" value="PRK04208.1"/>
    <property type="match status" value="1"/>
</dbReference>
<dbReference type="PANTHER" id="PTHR42704">
    <property type="entry name" value="RIBULOSE BISPHOSPHATE CARBOXYLASE"/>
    <property type="match status" value="1"/>
</dbReference>
<dbReference type="PANTHER" id="PTHR42704:SF17">
    <property type="entry name" value="RIBULOSE BISPHOSPHATE CARBOXYLASE LARGE CHAIN"/>
    <property type="match status" value="1"/>
</dbReference>
<dbReference type="Pfam" id="PF00016">
    <property type="entry name" value="RuBisCO_large"/>
    <property type="match status" value="1"/>
</dbReference>
<dbReference type="Pfam" id="PF02788">
    <property type="entry name" value="RuBisCO_large_N"/>
    <property type="match status" value="1"/>
</dbReference>
<dbReference type="SFLD" id="SFLDG01052">
    <property type="entry name" value="RuBisCO"/>
    <property type="match status" value="1"/>
</dbReference>
<dbReference type="SFLD" id="SFLDS00014">
    <property type="entry name" value="RuBisCO"/>
    <property type="match status" value="1"/>
</dbReference>
<dbReference type="SFLD" id="SFLDG00301">
    <property type="entry name" value="RuBisCO-like_proteins"/>
    <property type="match status" value="1"/>
</dbReference>
<dbReference type="SUPFAM" id="SSF51649">
    <property type="entry name" value="RuBisCo, C-terminal domain"/>
    <property type="match status" value="1"/>
</dbReference>
<dbReference type="SUPFAM" id="SSF54966">
    <property type="entry name" value="RuBisCO, large subunit, small (N-terminal) domain"/>
    <property type="match status" value="1"/>
</dbReference>
<dbReference type="PROSITE" id="PS00157">
    <property type="entry name" value="RUBISCO_LARGE"/>
    <property type="match status" value="1"/>
</dbReference>
<comment type="function">
    <text evidence="1">RuBisCO catalyzes two reactions: the carboxylation of D-ribulose 1,5-bisphosphate, the primary event in carbon dioxide fixation, as well as the oxidative fragmentation of the pentose substrate in the photorespiration process. Both reactions occur simultaneously and in competition at the same active site.</text>
</comment>
<comment type="catalytic activity">
    <reaction evidence="1">
        <text>2 (2R)-3-phosphoglycerate + 2 H(+) = D-ribulose 1,5-bisphosphate + CO2 + H2O</text>
        <dbReference type="Rhea" id="RHEA:23124"/>
        <dbReference type="ChEBI" id="CHEBI:15377"/>
        <dbReference type="ChEBI" id="CHEBI:15378"/>
        <dbReference type="ChEBI" id="CHEBI:16526"/>
        <dbReference type="ChEBI" id="CHEBI:57870"/>
        <dbReference type="ChEBI" id="CHEBI:58272"/>
        <dbReference type="EC" id="4.1.1.39"/>
    </reaction>
</comment>
<comment type="catalytic activity">
    <reaction evidence="1">
        <text>D-ribulose 1,5-bisphosphate + O2 = 2-phosphoglycolate + (2R)-3-phosphoglycerate + 2 H(+)</text>
        <dbReference type="Rhea" id="RHEA:36631"/>
        <dbReference type="ChEBI" id="CHEBI:15378"/>
        <dbReference type="ChEBI" id="CHEBI:15379"/>
        <dbReference type="ChEBI" id="CHEBI:57870"/>
        <dbReference type="ChEBI" id="CHEBI:58033"/>
        <dbReference type="ChEBI" id="CHEBI:58272"/>
    </reaction>
</comment>
<comment type="cofactor">
    <cofactor evidence="1">
        <name>Mg(2+)</name>
        <dbReference type="ChEBI" id="CHEBI:18420"/>
    </cofactor>
    <text evidence="1">Binds 1 Mg(2+) ion per subunit.</text>
</comment>
<comment type="subunit">
    <text evidence="1">Heterohexadecamer of 8 large chains and 8 small chains; disulfide-linked. The disulfide link is formed within the large subunit homodimers.</text>
</comment>
<comment type="subcellular location">
    <subcellularLocation>
        <location>Plastid</location>
        <location>Chloroplast</location>
    </subcellularLocation>
</comment>
<comment type="PTM">
    <text evidence="1">The disulfide bond which can form in the large chain dimeric partners within the hexadecamer appears to be associated with oxidative stress and protein turnover.</text>
</comment>
<comment type="miscellaneous">
    <text evidence="1">The basic functional RuBisCO is composed of a large chain homodimer in a 'head-to-tail' conformation. In form I RuBisCO this homodimer is arranged in a barrel-like tetramer with the small subunits forming a tetrameric 'cap' on each end of the 'barrel'.</text>
</comment>
<comment type="similarity">
    <text evidence="1">Belongs to the RuBisCO large chain family. Type I subfamily.</text>
</comment>
<feature type="propeptide" id="PRO_0000031207" evidence="1">
    <location>
        <begin position="1"/>
        <end position="2"/>
    </location>
</feature>
<feature type="chain" id="PRO_0000031208" description="Ribulose bisphosphate carboxylase large chain">
    <location>
        <begin position="3"/>
        <end position="475"/>
    </location>
</feature>
<feature type="active site" description="Proton acceptor" evidence="1">
    <location>
        <position position="175"/>
    </location>
</feature>
<feature type="active site" description="Proton acceptor" evidence="1">
    <location>
        <position position="294"/>
    </location>
</feature>
<feature type="binding site" description="in homodimeric partner" evidence="1">
    <location>
        <position position="123"/>
    </location>
    <ligand>
        <name>substrate</name>
    </ligand>
</feature>
<feature type="binding site" evidence="1">
    <location>
        <position position="173"/>
    </location>
    <ligand>
        <name>substrate</name>
    </ligand>
</feature>
<feature type="binding site" evidence="1">
    <location>
        <position position="177"/>
    </location>
    <ligand>
        <name>substrate</name>
    </ligand>
</feature>
<feature type="binding site" description="via carbamate group" evidence="1">
    <location>
        <position position="201"/>
    </location>
    <ligand>
        <name>Mg(2+)</name>
        <dbReference type="ChEBI" id="CHEBI:18420"/>
    </ligand>
</feature>
<feature type="binding site" evidence="1">
    <location>
        <position position="203"/>
    </location>
    <ligand>
        <name>Mg(2+)</name>
        <dbReference type="ChEBI" id="CHEBI:18420"/>
    </ligand>
</feature>
<feature type="binding site" evidence="1">
    <location>
        <position position="204"/>
    </location>
    <ligand>
        <name>Mg(2+)</name>
        <dbReference type="ChEBI" id="CHEBI:18420"/>
    </ligand>
</feature>
<feature type="binding site" evidence="1">
    <location>
        <position position="295"/>
    </location>
    <ligand>
        <name>substrate</name>
    </ligand>
</feature>
<feature type="binding site" evidence="1">
    <location>
        <position position="327"/>
    </location>
    <ligand>
        <name>substrate</name>
    </ligand>
</feature>
<feature type="binding site" evidence="1">
    <location>
        <position position="379"/>
    </location>
    <ligand>
        <name>substrate</name>
    </ligand>
</feature>
<feature type="site" description="Transition state stabilizer" evidence="1">
    <location>
        <position position="334"/>
    </location>
</feature>
<feature type="modified residue" description="N-acetylproline" evidence="1">
    <location>
        <position position="3"/>
    </location>
</feature>
<feature type="modified residue" description="N6,N6,N6-trimethyllysine" evidence="1">
    <location>
        <position position="14"/>
    </location>
</feature>
<feature type="modified residue" description="N6-carboxylysine" evidence="1">
    <location>
        <position position="201"/>
    </location>
</feature>
<feature type="disulfide bond" description="Interchain; in linked form" evidence="1">
    <location>
        <position position="247"/>
    </location>
</feature>
<name>RBL_EQUAR</name>
<reference key="1">
    <citation type="journal article" date="1994" name="Mol. Phylogenet. Evol.">
        <title>Phylogenetic analysis of green plant rbcL sequences.</title>
        <authorList>
            <person name="Manhart J.R."/>
        </authorList>
    </citation>
    <scope>NUCLEOTIDE SEQUENCE [GENOMIC DNA]</scope>
</reference>
<sequence>MSPQTETKAGVGFKAGVKDYRLTYFTPDYETKDTDILAAFRMTPQPGVPPEEAGAAVAAESSTGTWTTVWTDGLTSLDRYKGRCYNIEPVAGEDNQFIAYVAYPLDLFEEGSVTNLFTSIVGNVFGFKALRALRLEDLRIPPAYSKTFIGPPHGIQVERDKLNKYGRPLLGCTIKPKLGLSAKNYGRAVYECLRGGLDFTKDDENVNSQPFMRWRDRFLFVAEALFKSQAETGEIKGHYLNATAGTCEEMLKRAVFARELGAPIVMHDYLTGGFTANTSLAFYCRDNGLLLHIHRAMHAVIDRQKNHGIHFRVLAKALRMSGGDHIHTGTVVGKLEGERDLTLGFVDLLRDDFIEKDRSRGIYFTQDWVSMPGVLPVASGGIHVWHMPALTEIFGDDSVLQFGGGTLGHPWGNAPGAVANRVAVEACVQARNEGRDLATEGNDIIREAAKWSPELAAACEVWKEIKFEYEAMDTL</sequence>